<name>RS16_MAUEX</name>
<gene>
    <name type="primary">RPS16</name>
</gene>
<accession>Q876B4</accession>
<accession>Q876B5</accession>
<comment type="similarity">
    <text evidence="3">Belongs to the universal ribosomal protein uS9 family.</text>
</comment>
<dbReference type="EMBL" id="AY144901">
    <property type="protein sequence ID" value="AAO32465.1"/>
    <property type="molecule type" value="Genomic_DNA"/>
</dbReference>
<dbReference type="EMBL" id="AY144900">
    <property type="protein sequence ID" value="AAO32464.1"/>
    <property type="molecule type" value="Genomic_DNA"/>
</dbReference>
<dbReference type="SMR" id="Q876B4"/>
<dbReference type="OrthoDB" id="426865at2759"/>
<dbReference type="GO" id="GO:0022627">
    <property type="term" value="C:cytosolic small ribosomal subunit"/>
    <property type="evidence" value="ECO:0007669"/>
    <property type="project" value="TreeGrafter"/>
</dbReference>
<dbReference type="GO" id="GO:0003723">
    <property type="term" value="F:RNA binding"/>
    <property type="evidence" value="ECO:0007669"/>
    <property type="project" value="TreeGrafter"/>
</dbReference>
<dbReference type="GO" id="GO:0003735">
    <property type="term" value="F:structural constituent of ribosome"/>
    <property type="evidence" value="ECO:0007669"/>
    <property type="project" value="InterPro"/>
</dbReference>
<dbReference type="GO" id="GO:0000462">
    <property type="term" value="P:maturation of SSU-rRNA from tricistronic rRNA transcript (SSU-rRNA, 5.8S rRNA, LSU-rRNA)"/>
    <property type="evidence" value="ECO:0007669"/>
    <property type="project" value="TreeGrafter"/>
</dbReference>
<dbReference type="GO" id="GO:0006412">
    <property type="term" value="P:translation"/>
    <property type="evidence" value="ECO:0007669"/>
    <property type="project" value="InterPro"/>
</dbReference>
<dbReference type="FunFam" id="3.30.230.10:FF:000007">
    <property type="entry name" value="40S ribosomal protein S16"/>
    <property type="match status" value="1"/>
</dbReference>
<dbReference type="Gene3D" id="3.30.230.10">
    <property type="match status" value="1"/>
</dbReference>
<dbReference type="InterPro" id="IPR020568">
    <property type="entry name" value="Ribosomal_Su5_D2-typ_SF"/>
</dbReference>
<dbReference type="InterPro" id="IPR000754">
    <property type="entry name" value="Ribosomal_uS9"/>
</dbReference>
<dbReference type="InterPro" id="IPR020574">
    <property type="entry name" value="Ribosomal_uS9_CS"/>
</dbReference>
<dbReference type="InterPro" id="IPR014721">
    <property type="entry name" value="Ribsml_uS5_D2-typ_fold_subgr"/>
</dbReference>
<dbReference type="NCBIfam" id="NF001749">
    <property type="entry name" value="PRK00474.1"/>
    <property type="match status" value="1"/>
</dbReference>
<dbReference type="PANTHER" id="PTHR21569:SF16">
    <property type="entry name" value="RIBOSOMAL PROTEIN S16"/>
    <property type="match status" value="1"/>
</dbReference>
<dbReference type="PANTHER" id="PTHR21569">
    <property type="entry name" value="RIBOSOMAL PROTEIN S9"/>
    <property type="match status" value="1"/>
</dbReference>
<dbReference type="Pfam" id="PF00380">
    <property type="entry name" value="Ribosomal_S9"/>
    <property type="match status" value="1"/>
</dbReference>
<dbReference type="SUPFAM" id="SSF54211">
    <property type="entry name" value="Ribosomal protein S5 domain 2-like"/>
    <property type="match status" value="1"/>
</dbReference>
<dbReference type="PROSITE" id="PS00360">
    <property type="entry name" value="RIBOSOMAL_S9"/>
    <property type="match status" value="1"/>
</dbReference>
<evidence type="ECO:0000250" key="1"/>
<evidence type="ECO:0000256" key="2">
    <source>
        <dbReference type="SAM" id="MobiDB-lite"/>
    </source>
</evidence>
<evidence type="ECO:0000305" key="3"/>
<proteinExistence type="inferred from homology"/>
<keyword id="KW-0007">Acetylation</keyword>
<keyword id="KW-0687">Ribonucleoprotein</keyword>
<keyword id="KW-0689">Ribosomal protein</keyword>
<sequence length="143" mass="15888">MSAVPSVQTFGKKKSATAVAHVKAGKGLIKVNGAPITLVQPEILRFKVYEPLLLVGLDKFTNIDIRVRVTGGGHVSQVYAIRQAIAKGLIAYHQKFVDEQSKNELKRAFTLYDRTLLIADSRMPEPKKFGGKGARSRYQKSYR</sequence>
<organism>
    <name type="scientific">Maudiozyma exigua</name>
    <name type="common">Yeast</name>
    <name type="synonym">Kazachstania exigua</name>
    <dbReference type="NCBI Taxonomy" id="34358"/>
    <lineage>
        <taxon>Eukaryota</taxon>
        <taxon>Fungi</taxon>
        <taxon>Dikarya</taxon>
        <taxon>Ascomycota</taxon>
        <taxon>Saccharomycotina</taxon>
        <taxon>Saccharomycetes</taxon>
        <taxon>Saccharomycetales</taxon>
        <taxon>Saccharomycetaceae</taxon>
        <taxon>Maudiozyma</taxon>
    </lineage>
</organism>
<protein>
    <recommendedName>
        <fullName evidence="3">Small ribosomal subunit protein uS9</fullName>
    </recommendedName>
    <alternativeName>
        <fullName>40S ribosomal protein S16</fullName>
    </alternativeName>
</protein>
<reference key="1">
    <citation type="journal article" date="2003" name="Nature">
        <title>Yeast genome duplication was followed by asynchronous differentiation of duplicated genes.</title>
        <authorList>
            <person name="Langkjaer R.B."/>
            <person name="Cliften P.F."/>
            <person name="Johnston M."/>
            <person name="Piskur J."/>
        </authorList>
    </citation>
    <scope>NUCLEOTIDE SEQUENCE [GENOMIC DNA]</scope>
    <source>
        <strain>ATCC 10599 / BCRC 21524 / CBS 379 / DBVPG 6252 / JCM 1790 / NBRC 1128</strain>
    </source>
</reference>
<feature type="initiator methionine" description="Removed" evidence="1">
    <location>
        <position position="1"/>
    </location>
</feature>
<feature type="chain" id="PRO_0000111502" description="Small ribosomal subunit protein uS9">
    <location>
        <begin position="2"/>
        <end position="143"/>
    </location>
</feature>
<feature type="region of interest" description="Disordered" evidence="2">
    <location>
        <begin position="123"/>
        <end position="143"/>
    </location>
</feature>
<feature type="compositionally biased region" description="Basic residues" evidence="2">
    <location>
        <begin position="134"/>
        <end position="143"/>
    </location>
</feature>
<feature type="modified residue" description="N-acetylserine" evidence="1">
    <location>
        <position position="2"/>
    </location>
</feature>